<gene>
    <name evidence="1" type="primary">ruvA</name>
    <name type="ordered locus">Reut_A0484</name>
</gene>
<sequence length="193" mass="20187">MIGRIAGTLIEKNPPHLLVDCHGVGYEIDVPMSTFYNLPATGQPVTLLTQLIVREDAHLLYGFGSAAERNTFRELIKITGIGARMALAVLSGMSVSELAQAITLQEAGRLTRVPGIGKKTAERLMLELKGKLGAELGHAPGAAPVHDSAVDILNALLALGYSEKEAATAIKQVPAGTGVSDGIKLALKALSKA</sequence>
<evidence type="ECO:0000255" key="1">
    <source>
        <dbReference type="HAMAP-Rule" id="MF_00031"/>
    </source>
</evidence>
<accession>Q475R7</accession>
<organism>
    <name type="scientific">Cupriavidus pinatubonensis (strain JMP 134 / LMG 1197)</name>
    <name type="common">Cupriavidus necator (strain JMP 134)</name>
    <dbReference type="NCBI Taxonomy" id="264198"/>
    <lineage>
        <taxon>Bacteria</taxon>
        <taxon>Pseudomonadati</taxon>
        <taxon>Pseudomonadota</taxon>
        <taxon>Betaproteobacteria</taxon>
        <taxon>Burkholderiales</taxon>
        <taxon>Burkholderiaceae</taxon>
        <taxon>Cupriavidus</taxon>
    </lineage>
</organism>
<feature type="chain" id="PRO_0000224899" description="Holliday junction branch migration complex subunit RuvA">
    <location>
        <begin position="1"/>
        <end position="193"/>
    </location>
</feature>
<feature type="region of interest" description="Domain I" evidence="1">
    <location>
        <begin position="1"/>
        <end position="64"/>
    </location>
</feature>
<feature type="region of interest" description="Domain II" evidence="1">
    <location>
        <begin position="65"/>
        <end position="143"/>
    </location>
</feature>
<feature type="region of interest" description="Flexible linker" evidence="1">
    <location>
        <begin position="144"/>
        <end position="151"/>
    </location>
</feature>
<feature type="region of interest" description="Domain III" evidence="1">
    <location>
        <begin position="151"/>
        <end position="193"/>
    </location>
</feature>
<dbReference type="EMBL" id="CP000090">
    <property type="protein sequence ID" value="AAZ59866.1"/>
    <property type="molecule type" value="Genomic_DNA"/>
</dbReference>
<dbReference type="SMR" id="Q475R7"/>
<dbReference type="STRING" id="264198.Reut_A0484"/>
<dbReference type="KEGG" id="reu:Reut_A0484"/>
<dbReference type="eggNOG" id="COG0632">
    <property type="taxonomic scope" value="Bacteria"/>
</dbReference>
<dbReference type="HOGENOM" id="CLU_087936_0_0_4"/>
<dbReference type="OrthoDB" id="5293449at2"/>
<dbReference type="GO" id="GO:0005737">
    <property type="term" value="C:cytoplasm"/>
    <property type="evidence" value="ECO:0007669"/>
    <property type="project" value="UniProtKB-SubCell"/>
</dbReference>
<dbReference type="GO" id="GO:0009379">
    <property type="term" value="C:Holliday junction helicase complex"/>
    <property type="evidence" value="ECO:0007669"/>
    <property type="project" value="InterPro"/>
</dbReference>
<dbReference type="GO" id="GO:0048476">
    <property type="term" value="C:Holliday junction resolvase complex"/>
    <property type="evidence" value="ECO:0007669"/>
    <property type="project" value="UniProtKB-UniRule"/>
</dbReference>
<dbReference type="GO" id="GO:0005524">
    <property type="term" value="F:ATP binding"/>
    <property type="evidence" value="ECO:0007669"/>
    <property type="project" value="InterPro"/>
</dbReference>
<dbReference type="GO" id="GO:0000400">
    <property type="term" value="F:four-way junction DNA binding"/>
    <property type="evidence" value="ECO:0007669"/>
    <property type="project" value="UniProtKB-UniRule"/>
</dbReference>
<dbReference type="GO" id="GO:0009378">
    <property type="term" value="F:four-way junction helicase activity"/>
    <property type="evidence" value="ECO:0007669"/>
    <property type="project" value="InterPro"/>
</dbReference>
<dbReference type="GO" id="GO:0006310">
    <property type="term" value="P:DNA recombination"/>
    <property type="evidence" value="ECO:0007669"/>
    <property type="project" value="UniProtKB-UniRule"/>
</dbReference>
<dbReference type="GO" id="GO:0006281">
    <property type="term" value="P:DNA repair"/>
    <property type="evidence" value="ECO:0007669"/>
    <property type="project" value="UniProtKB-UniRule"/>
</dbReference>
<dbReference type="CDD" id="cd14332">
    <property type="entry name" value="UBA_RuvA_C"/>
    <property type="match status" value="1"/>
</dbReference>
<dbReference type="Gene3D" id="1.10.150.20">
    <property type="entry name" value="5' to 3' exonuclease, C-terminal subdomain"/>
    <property type="match status" value="1"/>
</dbReference>
<dbReference type="Gene3D" id="1.10.8.10">
    <property type="entry name" value="DNA helicase RuvA subunit, C-terminal domain"/>
    <property type="match status" value="1"/>
</dbReference>
<dbReference type="Gene3D" id="2.40.50.140">
    <property type="entry name" value="Nucleic acid-binding proteins"/>
    <property type="match status" value="1"/>
</dbReference>
<dbReference type="HAMAP" id="MF_00031">
    <property type="entry name" value="DNA_HJ_migration_RuvA"/>
    <property type="match status" value="1"/>
</dbReference>
<dbReference type="InterPro" id="IPR013849">
    <property type="entry name" value="DNA_helicase_Holl-junc_RuvA_I"/>
</dbReference>
<dbReference type="InterPro" id="IPR003583">
    <property type="entry name" value="Hlx-hairpin-Hlx_DNA-bd_motif"/>
</dbReference>
<dbReference type="InterPro" id="IPR012340">
    <property type="entry name" value="NA-bd_OB-fold"/>
</dbReference>
<dbReference type="InterPro" id="IPR000085">
    <property type="entry name" value="RuvA"/>
</dbReference>
<dbReference type="InterPro" id="IPR010994">
    <property type="entry name" value="RuvA_2-like"/>
</dbReference>
<dbReference type="InterPro" id="IPR011114">
    <property type="entry name" value="RuvA_C"/>
</dbReference>
<dbReference type="InterPro" id="IPR036267">
    <property type="entry name" value="RuvA_C_sf"/>
</dbReference>
<dbReference type="NCBIfam" id="TIGR00084">
    <property type="entry name" value="ruvA"/>
    <property type="match status" value="1"/>
</dbReference>
<dbReference type="Pfam" id="PF14520">
    <property type="entry name" value="HHH_5"/>
    <property type="match status" value="1"/>
</dbReference>
<dbReference type="Pfam" id="PF07499">
    <property type="entry name" value="RuvA_C"/>
    <property type="match status" value="1"/>
</dbReference>
<dbReference type="Pfam" id="PF01330">
    <property type="entry name" value="RuvA_N"/>
    <property type="match status" value="1"/>
</dbReference>
<dbReference type="SMART" id="SM00278">
    <property type="entry name" value="HhH1"/>
    <property type="match status" value="2"/>
</dbReference>
<dbReference type="SUPFAM" id="SSF46929">
    <property type="entry name" value="DNA helicase RuvA subunit, C-terminal domain"/>
    <property type="match status" value="1"/>
</dbReference>
<dbReference type="SUPFAM" id="SSF50249">
    <property type="entry name" value="Nucleic acid-binding proteins"/>
    <property type="match status" value="1"/>
</dbReference>
<dbReference type="SUPFAM" id="SSF47781">
    <property type="entry name" value="RuvA domain 2-like"/>
    <property type="match status" value="1"/>
</dbReference>
<name>RUVA_CUPPJ</name>
<comment type="function">
    <text evidence="1">The RuvA-RuvB-RuvC complex processes Holliday junction (HJ) DNA during genetic recombination and DNA repair, while the RuvA-RuvB complex plays an important role in the rescue of blocked DNA replication forks via replication fork reversal (RFR). RuvA specifically binds to HJ cruciform DNA, conferring on it an open structure. The RuvB hexamer acts as an ATP-dependent pump, pulling dsDNA into and through the RuvAB complex. HJ branch migration allows RuvC to scan DNA until it finds its consensus sequence, where it cleaves and resolves the cruciform DNA.</text>
</comment>
<comment type="subunit">
    <text evidence="1">Homotetramer. Forms an RuvA(8)-RuvB(12)-Holliday junction (HJ) complex. HJ DNA is sandwiched between 2 RuvA tetramers; dsDNA enters through RuvA and exits via RuvB. An RuvB hexamer assembles on each DNA strand where it exits the tetramer. Each RuvB hexamer is contacted by two RuvA subunits (via domain III) on 2 adjacent RuvB subunits; this complex drives branch migration. In the full resolvosome a probable DNA-RuvA(4)-RuvB(12)-RuvC(2) complex forms which resolves the HJ.</text>
</comment>
<comment type="subcellular location">
    <subcellularLocation>
        <location evidence="1">Cytoplasm</location>
    </subcellularLocation>
</comment>
<comment type="domain">
    <text evidence="1">Has three domains with a flexible linker between the domains II and III and assumes an 'L' shape. Domain III is highly mobile and contacts RuvB.</text>
</comment>
<comment type="similarity">
    <text evidence="1">Belongs to the RuvA family.</text>
</comment>
<keyword id="KW-0963">Cytoplasm</keyword>
<keyword id="KW-0227">DNA damage</keyword>
<keyword id="KW-0233">DNA recombination</keyword>
<keyword id="KW-0234">DNA repair</keyword>
<keyword id="KW-0238">DNA-binding</keyword>
<protein>
    <recommendedName>
        <fullName evidence="1">Holliday junction branch migration complex subunit RuvA</fullName>
    </recommendedName>
</protein>
<proteinExistence type="inferred from homology"/>
<reference key="1">
    <citation type="journal article" date="2010" name="PLoS ONE">
        <title>The complete multipartite genome sequence of Cupriavidus necator JMP134, a versatile pollutant degrader.</title>
        <authorList>
            <person name="Lykidis A."/>
            <person name="Perez-Pantoja D."/>
            <person name="Ledger T."/>
            <person name="Mavromatis K."/>
            <person name="Anderson I.J."/>
            <person name="Ivanova N.N."/>
            <person name="Hooper S.D."/>
            <person name="Lapidus A."/>
            <person name="Lucas S."/>
            <person name="Gonzalez B."/>
            <person name="Kyrpides N.C."/>
        </authorList>
    </citation>
    <scope>NUCLEOTIDE SEQUENCE [LARGE SCALE GENOMIC DNA]</scope>
    <source>
        <strain>JMP134 / LMG 1197</strain>
    </source>
</reference>